<comment type="function">
    <text evidence="1 3 4 5 6">Required for the insertion and/or proper folding and/or complex formation of integral membrane proteins into the membrane. Involved in integration of membrane proteins that insert both dependently and independently of the Sec translocase complex, as well as at least some lipoproteins (By similarity). Also involved in protein secretion processes. Essential for sporulation by activating sigma factor SpoIIIG/SigG after engulfment is completed in the prespore, maybe by acting on SpoIIIAE. It has an overlapping, although partly distinct, function compared to YqjG(MisCB).</text>
</comment>
<comment type="subunit">
    <text evidence="8 9">Mostly monomeric, it may also form dimers. Interacts with SpoIIIAE. Forms a complex with the F(1)F(0) ATP synthase in which can be found the alpha, beta, gamma, delta and epsilon subunits of F(1) and a, b and subunits of F(0). YqgA is found in the same complex.</text>
</comment>
<comment type="subcellular location">
    <subcellularLocation>
        <location evidence="3 7">Cell membrane</location>
        <topology evidence="3 7">Multi-pass membrane protein</topology>
    </subcellularLocation>
    <text>Found uniformly distributed in both the mother cell and forespore following sporulation.</text>
</comment>
<comment type="developmental stage">
    <text evidence="3 4 6">SpoIIIJ is required only after engulfment and turned off at the onset of sporulation. While it is predominantly expressed in vegetative cells, its low expression after the onset of sporulation is essential for sporulation to occur.</text>
</comment>
<comment type="disruption phenotype">
    <text evidence="3 4 6 8 10">Essential for sporulation, disruption affects the expression of prespore-specific genes but not early mother-cell-specific genes, i.e. cells do not progress beyond stage III of sporulation. A double spoIIIJ-yqjG deletion is lethal. Genetic competence increases about 20-fold in the single disruption.</text>
</comment>
<comment type="similarity">
    <text evidence="11">Belongs to the OXA1/ALB3/YidC family. Type 2 subfamily.</text>
</comment>
<comment type="sequence caution" evidence="11">
    <conflict type="erroneous initiation">
        <sequence resource="EMBL-CDS" id="CAA78595"/>
    </conflict>
    <text>Truncated N-terminus.</text>
</comment>
<gene>
    <name type="primary">misCA</name>
    <name type="synonym">spoIIIJ</name>
    <name type="ordered locus">BSU41040</name>
</gene>
<name>MISCA_BACSU</name>
<feature type="signal peptide" evidence="2">
    <location>
        <begin position="1"/>
        <end position="22"/>
    </location>
</feature>
<feature type="chain" id="PRO_0000020378" description="Membrane protein insertase MisCA">
    <location>
        <begin position="23"/>
        <end position="261"/>
    </location>
</feature>
<feature type="transmembrane region" description="Helical" evidence="2">
    <location>
        <begin position="61"/>
        <end position="81"/>
    </location>
</feature>
<feature type="transmembrane region" description="Helical" evidence="2">
    <location>
        <begin position="131"/>
        <end position="151"/>
    </location>
</feature>
<feature type="transmembrane region" description="Helical" evidence="2">
    <location>
        <begin position="174"/>
        <end position="194"/>
    </location>
</feature>
<feature type="transmembrane region" description="Helical" evidence="2">
    <location>
        <begin position="204"/>
        <end position="224"/>
    </location>
</feature>
<feature type="transmembrane region" description="Helical" evidence="2">
    <location>
        <begin position="225"/>
        <end position="245"/>
    </location>
</feature>
<feature type="lipid moiety-binding region" description="N-palmitoyl cysteine" evidence="2">
    <location>
        <position position="23"/>
    </location>
</feature>
<feature type="lipid moiety-binding region" description="S-diacylglycerol cysteine" evidence="2">
    <location>
        <position position="23"/>
    </location>
</feature>
<proteinExistence type="evidence at protein level"/>
<reference key="1">
    <citation type="journal article" date="1992" name="J. Gen. Microbiol.">
        <title>Structure and function of the spoIIIJ gene of Bacillus subtilis: a vegetatively expressed gene that is essential for sigma G activity at an intermediate stage of sporulation.</title>
        <authorList>
            <person name="Errington J."/>
            <person name="Appleby L."/>
            <person name="Daniel R.A."/>
            <person name="Goodfellow H."/>
            <person name="Partridge S.R."/>
            <person name="Yudkin M.D."/>
        </authorList>
    </citation>
    <scope>NUCLEOTIDE SEQUENCE [GENOMIC DNA]</scope>
    <scope>FUNCTION</scope>
    <scope>DEVELOPMENTAL STAGE</scope>
    <scope>DISRUPTION PHENOTYPE</scope>
    <source>
        <strain>168</strain>
    </source>
</reference>
<reference key="2">
    <citation type="journal article" date="1992" name="Mol. Microbiol.">
        <title>Genes and their organization in the replication origin region of the bacterial chromosome.</title>
        <authorList>
            <person name="Ogasawara N."/>
            <person name="Yoshikawa H."/>
        </authorList>
    </citation>
    <scope>NUCLEOTIDE SEQUENCE [GENOMIC DNA]</scope>
    <source>
        <strain>168 / CRK2000</strain>
    </source>
</reference>
<reference key="3">
    <citation type="journal article" date="1994" name="DNA Res.">
        <title>Systematic sequencing of the 180 kilobase region of the Bacillus subtilis chromosome containing the replication origin.</title>
        <authorList>
            <person name="Ogasawara N."/>
            <person name="Nakai S."/>
            <person name="Yoshikawa H."/>
        </authorList>
    </citation>
    <scope>NUCLEOTIDE SEQUENCE [GENOMIC DNA]</scope>
    <source>
        <strain>168</strain>
    </source>
</reference>
<reference key="4">
    <citation type="journal article" date="1997" name="Nature">
        <title>The complete genome sequence of the Gram-positive bacterium Bacillus subtilis.</title>
        <authorList>
            <person name="Kunst F."/>
            <person name="Ogasawara N."/>
            <person name="Moszer I."/>
            <person name="Albertini A.M."/>
            <person name="Alloni G."/>
            <person name="Azevedo V."/>
            <person name="Bertero M.G."/>
            <person name="Bessieres P."/>
            <person name="Bolotin A."/>
            <person name="Borchert S."/>
            <person name="Borriss R."/>
            <person name="Boursier L."/>
            <person name="Brans A."/>
            <person name="Braun M."/>
            <person name="Brignell S.C."/>
            <person name="Bron S."/>
            <person name="Brouillet S."/>
            <person name="Bruschi C.V."/>
            <person name="Caldwell B."/>
            <person name="Capuano V."/>
            <person name="Carter N.M."/>
            <person name="Choi S.-K."/>
            <person name="Codani J.-J."/>
            <person name="Connerton I.F."/>
            <person name="Cummings N.J."/>
            <person name="Daniel R.A."/>
            <person name="Denizot F."/>
            <person name="Devine K.M."/>
            <person name="Duesterhoeft A."/>
            <person name="Ehrlich S.D."/>
            <person name="Emmerson P.T."/>
            <person name="Entian K.-D."/>
            <person name="Errington J."/>
            <person name="Fabret C."/>
            <person name="Ferrari E."/>
            <person name="Foulger D."/>
            <person name="Fritz C."/>
            <person name="Fujita M."/>
            <person name="Fujita Y."/>
            <person name="Fuma S."/>
            <person name="Galizzi A."/>
            <person name="Galleron N."/>
            <person name="Ghim S.-Y."/>
            <person name="Glaser P."/>
            <person name="Goffeau A."/>
            <person name="Golightly E.J."/>
            <person name="Grandi G."/>
            <person name="Guiseppi G."/>
            <person name="Guy B.J."/>
            <person name="Haga K."/>
            <person name="Haiech J."/>
            <person name="Harwood C.R."/>
            <person name="Henaut A."/>
            <person name="Hilbert H."/>
            <person name="Holsappel S."/>
            <person name="Hosono S."/>
            <person name="Hullo M.-F."/>
            <person name="Itaya M."/>
            <person name="Jones L.-M."/>
            <person name="Joris B."/>
            <person name="Karamata D."/>
            <person name="Kasahara Y."/>
            <person name="Klaerr-Blanchard M."/>
            <person name="Klein C."/>
            <person name="Kobayashi Y."/>
            <person name="Koetter P."/>
            <person name="Koningstein G."/>
            <person name="Krogh S."/>
            <person name="Kumano M."/>
            <person name="Kurita K."/>
            <person name="Lapidus A."/>
            <person name="Lardinois S."/>
            <person name="Lauber J."/>
            <person name="Lazarevic V."/>
            <person name="Lee S.-M."/>
            <person name="Levine A."/>
            <person name="Liu H."/>
            <person name="Masuda S."/>
            <person name="Mauel C."/>
            <person name="Medigue C."/>
            <person name="Medina N."/>
            <person name="Mellado R.P."/>
            <person name="Mizuno M."/>
            <person name="Moestl D."/>
            <person name="Nakai S."/>
            <person name="Noback M."/>
            <person name="Noone D."/>
            <person name="O'Reilly M."/>
            <person name="Ogawa K."/>
            <person name="Ogiwara A."/>
            <person name="Oudega B."/>
            <person name="Park S.-H."/>
            <person name="Parro V."/>
            <person name="Pohl T.M."/>
            <person name="Portetelle D."/>
            <person name="Porwollik S."/>
            <person name="Prescott A.M."/>
            <person name="Presecan E."/>
            <person name="Pujic P."/>
            <person name="Purnelle B."/>
            <person name="Rapoport G."/>
            <person name="Rey M."/>
            <person name="Reynolds S."/>
            <person name="Rieger M."/>
            <person name="Rivolta C."/>
            <person name="Rocha E."/>
            <person name="Roche B."/>
            <person name="Rose M."/>
            <person name="Sadaie Y."/>
            <person name="Sato T."/>
            <person name="Scanlan E."/>
            <person name="Schleich S."/>
            <person name="Schroeter R."/>
            <person name="Scoffone F."/>
            <person name="Sekiguchi J."/>
            <person name="Sekowska A."/>
            <person name="Seror S.J."/>
            <person name="Serror P."/>
            <person name="Shin B.-S."/>
            <person name="Soldo B."/>
            <person name="Sorokin A."/>
            <person name="Tacconi E."/>
            <person name="Takagi T."/>
            <person name="Takahashi H."/>
            <person name="Takemaru K."/>
            <person name="Takeuchi M."/>
            <person name="Tamakoshi A."/>
            <person name="Tanaka T."/>
            <person name="Terpstra P."/>
            <person name="Tognoni A."/>
            <person name="Tosato V."/>
            <person name="Uchiyama S."/>
            <person name="Vandenbol M."/>
            <person name="Vannier F."/>
            <person name="Vassarotti A."/>
            <person name="Viari A."/>
            <person name="Wambutt R."/>
            <person name="Wedler E."/>
            <person name="Wedler H."/>
            <person name="Weitzenegger T."/>
            <person name="Winters P."/>
            <person name="Wipat A."/>
            <person name="Yamamoto H."/>
            <person name="Yamane K."/>
            <person name="Yasumoto K."/>
            <person name="Yata K."/>
            <person name="Yoshida K."/>
            <person name="Yoshikawa H.-F."/>
            <person name="Zumstein E."/>
            <person name="Yoshikawa H."/>
            <person name="Danchin A."/>
        </authorList>
    </citation>
    <scope>NUCLEOTIDE SEQUENCE [LARGE SCALE GENOMIC DNA]</scope>
    <source>
        <strain>168</strain>
    </source>
</reference>
<reference key="5">
    <citation type="journal article" date="2002" name="J. Bacteriol.">
        <title>Analysis of the Bacillus subtilis spoIIIJ gene and its paralogue gene, yqjG.</title>
        <authorList>
            <person name="Murakami T."/>
            <person name="Haga K."/>
            <person name="Takeuchi M."/>
            <person name="Sato T."/>
        </authorList>
    </citation>
    <scope>FUNCTION</scope>
    <scope>SUBCELLULAR LOCATION</scope>
    <scope>DEVELOPMENTAL STAGE</scope>
    <scope>DISRUPTION PHENOTYPE</scope>
    <source>
        <strain>168</strain>
    </source>
</reference>
<reference key="6">
    <citation type="journal article" date="2003" name="J. Biol. Chem.">
        <title>Complementary impact of paralogous Oxa1-like proteins of Bacillus subtilis on post-translocational stages in protein secretion.</title>
        <authorList>
            <person name="Tjalsma H."/>
            <person name="Bron S."/>
            <person name="van Dijl J.M."/>
        </authorList>
    </citation>
    <scope>FUNCTION</scope>
    <scope>DEVELOPMENTAL STAGE</scope>
    <scope>DISRUPTION PHENOTYPE</scope>
    <source>
        <strain>168</strain>
    </source>
</reference>
<reference key="7">
    <citation type="journal article" date="2003" name="J. Bacteriol.">
        <title>Expression of spoIIIJ in the prespore is sufficient for activation of sigma G and for sporulation in Bacillus subtilis.</title>
        <authorList>
            <person name="Serrano M."/>
            <person name="Corte L."/>
            <person name="Opdyke J."/>
            <person name="Moran C.P. Jr."/>
            <person name="Henriques A.O."/>
        </authorList>
    </citation>
    <scope>FUNCTION IN SPORULATION</scope>
    <source>
        <strain>168 / MB24</strain>
    </source>
</reference>
<reference key="8">
    <citation type="journal article" date="2005" name="J. Bacteriol.">
        <title>Localization of translocation complex components in Bacillus subtilis: enrichment of the signal recognition particle receptor at early sporulation septa.</title>
        <authorList>
            <person name="Rubio A."/>
            <person name="Jiang X."/>
            <person name="Pogliano K."/>
        </authorList>
    </citation>
    <scope>SUBCELLULAR LOCATION</scope>
    <source>
        <strain>168 / PY79</strain>
    </source>
</reference>
<reference key="9">
    <citation type="journal article" date="2008" name="J. Bacteriol.">
        <title>Processing of a membrane protein required for cell-to-cell signaling during endospore formation in Bacillus subtilis.</title>
        <authorList>
            <person name="Serrano M."/>
            <person name="Vieira F."/>
            <person name="Moran C.P. Jr."/>
            <person name="Henriques A.O."/>
        </authorList>
    </citation>
    <scope>INTERACTION WITH SPOIIIAE</scope>
    <scope>SUBUNIT</scope>
    <scope>DISRUPTION PHENOTYPE</scope>
    <source>
        <strain>168 / MB24</strain>
    </source>
</reference>
<reference key="10">
    <citation type="journal article" date="2009" name="J. Bacteriol.">
        <title>Bacillus subtilis SpoIIIJ and YqjG function in membrane protein biogenesis.</title>
        <authorList>
            <person name="Saller M.J."/>
            <person name="Fusetti F."/>
            <person name="Driessen A.J."/>
        </authorList>
    </citation>
    <scope>INTERACTION WITH F(1)F(0) ATP SYNTHASE COMPLEX AND YQGA</scope>
    <scope>COMPLEMENTS E.COLI</scope>
    <source>
        <strain>168</strain>
    </source>
</reference>
<reference key="11">
    <citation type="journal article" date="2011" name="Proteomics">
        <title>Bacillus subtilis YqjG is required for genetic competence development.</title>
        <authorList>
            <person name="Saller M.J."/>
            <person name="Otto A."/>
            <person name="Berrelkamp-Lahpor G.A."/>
            <person name="Becher D."/>
            <person name="Hecker M."/>
            <person name="Driessen A.J."/>
        </authorList>
    </citation>
    <scope>DISRUPTION PHENOTYPE</scope>
    <source>
        <strain>168</strain>
    </source>
</reference>
<dbReference type="EMBL" id="Z14225">
    <property type="protein sequence ID" value="CAA78595.1"/>
    <property type="status" value="ALT_INIT"/>
    <property type="molecule type" value="Genomic_DNA"/>
</dbReference>
<dbReference type="EMBL" id="X62539">
    <property type="protein sequence ID" value="CAA44401.1"/>
    <property type="molecule type" value="Genomic_DNA"/>
</dbReference>
<dbReference type="EMBL" id="D26185">
    <property type="protein sequence ID" value="BAA05234.1"/>
    <property type="molecule type" value="Genomic_DNA"/>
</dbReference>
<dbReference type="EMBL" id="AL009126">
    <property type="protein sequence ID" value="CAB16141.1"/>
    <property type="molecule type" value="Genomic_DNA"/>
</dbReference>
<dbReference type="PIR" id="I40437">
    <property type="entry name" value="I40437"/>
</dbReference>
<dbReference type="RefSeq" id="WP_010886648.1">
    <property type="nucleotide sequence ID" value="NZ_OZ025638.1"/>
</dbReference>
<dbReference type="SMR" id="Q01625"/>
<dbReference type="FunCoup" id="Q01625">
    <property type="interactions" value="537"/>
</dbReference>
<dbReference type="IntAct" id="Q01625">
    <property type="interactions" value="10"/>
</dbReference>
<dbReference type="STRING" id="224308.BSU41040"/>
<dbReference type="TCDB" id="2.A.9.3.2">
    <property type="family name" value="the membrane protein insertase (yidc/alb3/oxa1) family"/>
</dbReference>
<dbReference type="PaxDb" id="224308-BSU41040"/>
<dbReference type="DNASU" id="937934"/>
<dbReference type="EnsemblBacteria" id="CAB16141">
    <property type="protein sequence ID" value="CAB16141"/>
    <property type="gene ID" value="BSU_41040"/>
</dbReference>
<dbReference type="GeneID" id="937934"/>
<dbReference type="KEGG" id="bsu:BSU41040"/>
<dbReference type="PATRIC" id="fig|224308.43.peg.4313"/>
<dbReference type="eggNOG" id="COG0706">
    <property type="taxonomic scope" value="Bacteria"/>
</dbReference>
<dbReference type="InParanoid" id="Q01625"/>
<dbReference type="OrthoDB" id="9780552at2"/>
<dbReference type="PhylomeDB" id="Q01625"/>
<dbReference type="BioCyc" id="BSUB:BSU41040-MONOMER"/>
<dbReference type="Proteomes" id="UP000001570">
    <property type="component" value="Chromosome"/>
</dbReference>
<dbReference type="GO" id="GO:0005886">
    <property type="term" value="C:plasma membrane"/>
    <property type="evidence" value="ECO:0000318"/>
    <property type="project" value="GO_Central"/>
</dbReference>
<dbReference type="GO" id="GO:0032977">
    <property type="term" value="F:membrane insertase activity"/>
    <property type="evidence" value="ECO:0000318"/>
    <property type="project" value="GO_Central"/>
</dbReference>
<dbReference type="GO" id="GO:0051205">
    <property type="term" value="P:protein insertion into membrane"/>
    <property type="evidence" value="ECO:0000318"/>
    <property type="project" value="GO_Central"/>
</dbReference>
<dbReference type="GO" id="GO:0015031">
    <property type="term" value="P:protein transport"/>
    <property type="evidence" value="ECO:0007669"/>
    <property type="project" value="UniProtKB-KW"/>
</dbReference>
<dbReference type="CDD" id="cd20070">
    <property type="entry name" value="5TM_YidC_Alb3"/>
    <property type="match status" value="1"/>
</dbReference>
<dbReference type="HAMAP" id="MF_01811">
    <property type="entry name" value="YidC_type2"/>
    <property type="match status" value="1"/>
</dbReference>
<dbReference type="InterPro" id="IPR001708">
    <property type="entry name" value="YidC/ALB3/OXA1/COX18"/>
</dbReference>
<dbReference type="InterPro" id="IPR028055">
    <property type="entry name" value="YidC/Oxa/ALB_C"/>
</dbReference>
<dbReference type="InterPro" id="IPR023060">
    <property type="entry name" value="YidC/YidC1/YidC2_Firmicutes"/>
</dbReference>
<dbReference type="InterPro" id="IPR047196">
    <property type="entry name" value="YidC_ALB_C"/>
</dbReference>
<dbReference type="NCBIfam" id="NF002803">
    <property type="entry name" value="PRK02944.1"/>
    <property type="match status" value="1"/>
</dbReference>
<dbReference type="NCBIfam" id="TIGR03592">
    <property type="entry name" value="yidC_oxa1_cterm"/>
    <property type="match status" value="1"/>
</dbReference>
<dbReference type="PANTHER" id="PTHR12428:SF65">
    <property type="entry name" value="CYTOCHROME C OXIDASE ASSEMBLY PROTEIN COX18, MITOCHONDRIAL"/>
    <property type="match status" value="1"/>
</dbReference>
<dbReference type="PANTHER" id="PTHR12428">
    <property type="entry name" value="OXA1"/>
    <property type="match status" value="1"/>
</dbReference>
<dbReference type="Pfam" id="PF02096">
    <property type="entry name" value="60KD_IMP"/>
    <property type="match status" value="1"/>
</dbReference>
<dbReference type="PRINTS" id="PR00701">
    <property type="entry name" value="60KDINNERMP"/>
</dbReference>
<dbReference type="PRINTS" id="PR01900">
    <property type="entry name" value="YIDCPROTEIN"/>
</dbReference>
<dbReference type="PROSITE" id="PS51257">
    <property type="entry name" value="PROKAR_LIPOPROTEIN"/>
    <property type="match status" value="1"/>
</dbReference>
<accession>Q01625</accession>
<accession>O32298</accession>
<evidence type="ECO:0000250" key="1"/>
<evidence type="ECO:0000255" key="2"/>
<evidence type="ECO:0000269" key="3">
    <source>
    </source>
</evidence>
<evidence type="ECO:0000269" key="4">
    <source>
    </source>
</evidence>
<evidence type="ECO:0000269" key="5">
    <source>
    </source>
</evidence>
<evidence type="ECO:0000269" key="6">
    <source>
    </source>
</evidence>
<evidence type="ECO:0000269" key="7">
    <source>
    </source>
</evidence>
<evidence type="ECO:0000269" key="8">
    <source>
    </source>
</evidence>
<evidence type="ECO:0000269" key="9">
    <source>
    </source>
</evidence>
<evidence type="ECO:0000269" key="10">
    <source>
    </source>
</evidence>
<evidence type="ECO:0000305" key="11"/>
<keyword id="KW-1003">Cell membrane</keyword>
<keyword id="KW-0143">Chaperone</keyword>
<keyword id="KW-0449">Lipoprotein</keyword>
<keyword id="KW-0472">Membrane</keyword>
<keyword id="KW-0564">Palmitate</keyword>
<keyword id="KW-0653">Protein transport</keyword>
<keyword id="KW-1185">Reference proteome</keyword>
<keyword id="KW-0732">Signal</keyword>
<keyword id="KW-0812">Transmembrane</keyword>
<keyword id="KW-1133">Transmembrane helix</keyword>
<keyword id="KW-0813">Transport</keyword>
<organism>
    <name type="scientific">Bacillus subtilis (strain 168)</name>
    <dbReference type="NCBI Taxonomy" id="224308"/>
    <lineage>
        <taxon>Bacteria</taxon>
        <taxon>Bacillati</taxon>
        <taxon>Bacillota</taxon>
        <taxon>Bacilli</taxon>
        <taxon>Bacillales</taxon>
        <taxon>Bacillaceae</taxon>
        <taxon>Bacillus</taxon>
    </lineage>
</organism>
<protein>
    <recommendedName>
        <fullName>Membrane protein insertase MisCA</fullName>
    </recommendedName>
    <alternativeName>
        <fullName>Foldase YidC 2</fullName>
    </alternativeName>
    <alternativeName>
        <fullName>Membrane integrase YidC 2</fullName>
    </alternativeName>
    <alternativeName>
        <fullName>Membrane protein YidC 2</fullName>
    </alternativeName>
    <alternativeName>
        <fullName>Stage III sporulation protein J</fullName>
        <shortName>SpoIIIJ</shortName>
    </alternativeName>
</protein>
<sequence>MLLKRRIGLLLSMVGVFMLLAGCSSVKEPITADSPHFWDKYVVYPLSELITYVAKLTGDNYGLSIILVTILIRLLILPLMIKQLRSSKAMQALQPEMQKLKEKYSSKDQKTQQKLQQETMALFQKHGVNPLAGCFPILIQMPILIGFYHAIMRTQAISEHSFLWFDLGEKDPYYILPIVAGVATFVQQKLMMAGNAQQNPQMAMMLWIMPIMIIVFAINFPAALSLYWVVGNLFMIAQTFLIKGPDIKKNPEPQKAGGKKK</sequence>